<protein>
    <recommendedName>
        <fullName evidence="1">Polyribonucleotide nucleotidyltransferase</fullName>
        <ecNumber evidence="1">2.7.7.8</ecNumber>
    </recommendedName>
    <alternativeName>
        <fullName evidence="1">Polynucleotide phosphorylase</fullName>
        <shortName evidence="1">PNPase</shortName>
    </alternativeName>
</protein>
<organism>
    <name type="scientific">Salmonella arizonae (strain ATCC BAA-731 / CDC346-86 / RSK2980)</name>
    <dbReference type="NCBI Taxonomy" id="41514"/>
    <lineage>
        <taxon>Bacteria</taxon>
        <taxon>Pseudomonadati</taxon>
        <taxon>Pseudomonadota</taxon>
        <taxon>Gammaproteobacteria</taxon>
        <taxon>Enterobacterales</taxon>
        <taxon>Enterobacteriaceae</taxon>
        <taxon>Salmonella</taxon>
    </lineage>
</organism>
<comment type="function">
    <text evidence="1">Involved in mRNA degradation. Catalyzes the phosphorolysis of single-stranded polyribonucleotides processively in the 3'- to 5'-direction.</text>
</comment>
<comment type="catalytic activity">
    <reaction evidence="1">
        <text>RNA(n+1) + phosphate = RNA(n) + a ribonucleoside 5'-diphosphate</text>
        <dbReference type="Rhea" id="RHEA:22096"/>
        <dbReference type="Rhea" id="RHEA-COMP:14527"/>
        <dbReference type="Rhea" id="RHEA-COMP:17342"/>
        <dbReference type="ChEBI" id="CHEBI:43474"/>
        <dbReference type="ChEBI" id="CHEBI:57930"/>
        <dbReference type="ChEBI" id="CHEBI:140395"/>
        <dbReference type="EC" id="2.7.7.8"/>
    </reaction>
</comment>
<comment type="cofactor">
    <cofactor evidence="1">
        <name>Mg(2+)</name>
        <dbReference type="ChEBI" id="CHEBI:18420"/>
    </cofactor>
</comment>
<comment type="subunit">
    <text evidence="1">Component of the RNA degradosome, which is a multiprotein complex involved in RNA processing and mRNA degradation.</text>
</comment>
<comment type="subcellular location">
    <subcellularLocation>
        <location evidence="1">Cytoplasm</location>
    </subcellularLocation>
</comment>
<comment type="similarity">
    <text evidence="1">Belongs to the polyribonucleotide nucleotidyltransferase family.</text>
</comment>
<comment type="sequence caution" evidence="3">
    <conflict type="erroneous initiation">
        <sequence resource="EMBL-CDS" id="ABX24121"/>
    </conflict>
</comment>
<gene>
    <name evidence="1" type="primary">pnp</name>
    <name type="ordered locus">SARI_04342</name>
</gene>
<proteinExistence type="inferred from homology"/>
<sequence length="711" mass="77043">MLNPIVRKFQYGQHTVTLETGMMARQATAAVMVSMDDTAVFVTVVGQKKAKPGQDFFPLTVNYQERTYAAGRIPGSFFRREGRPSEGETLIARLIDRPVRPLFPEGFVNEVQVIATVVSVNPQVNPDIVAMIGASAALSLSGIPFNGPIGAARVGYINDQYVLNPTQDELKESKLDLVVAGTEAAVLMVESEAELLSEDTMLGAVVFGHEQQQVVIQAINDLVKEAGKPRWDWQPEAVNDALNARVAALAESRLSDAYRITDKQERYAQVDVIKSETIDQLTAEDDTLDANELGEILHAIEKNVVRSRVLAGEPRIDGREKDMIRGLDVRTGVLPRTHGSALFTRGETQALVTATLGTARDAQVLDELMGERTDSFLFHYNFPPYSVGETGMVGSPKRREIGHGRLAKRGVLAVMPDMDKFPYTVRVVSEITESNGSSSMASVCGASLALMDAGVPIKAAVAGIAMGLVKEGDNYVVLSDILGDEDHLGDMDFKVAGSREGISALQMDIKIEGITKEIMQVALNQAKGARLHILGVMEQAINAPRGDISEFAPRIHTIKISTDKIKDVIGKGGSVIRALTEETGTTIEIEDDGTVKIAATDGEKAKYAIRRIEEITAEIEVGRIYNGKVTRIVDFGAFVAIGGGKEGLVHISQIADKRVEKVTDYLQMGQEVPVKVLEVDRQGRVRLSIKEATEQTQPAAAPEAPTSEQGE</sequence>
<reference key="1">
    <citation type="submission" date="2007-11" db="EMBL/GenBank/DDBJ databases">
        <authorList>
            <consortium name="The Salmonella enterica serovar Arizonae Genome Sequencing Project"/>
            <person name="McClelland M."/>
            <person name="Sanderson E.K."/>
            <person name="Porwollik S."/>
            <person name="Spieth J."/>
            <person name="Clifton W.S."/>
            <person name="Fulton R."/>
            <person name="Chunyan W."/>
            <person name="Wollam A."/>
            <person name="Shah N."/>
            <person name="Pepin K."/>
            <person name="Bhonagiri V."/>
            <person name="Nash W."/>
            <person name="Johnson M."/>
            <person name="Thiruvilangam P."/>
            <person name="Wilson R."/>
        </authorList>
    </citation>
    <scope>NUCLEOTIDE SEQUENCE [LARGE SCALE GENOMIC DNA]</scope>
    <source>
        <strain>ATCC BAA-731 / CDC346-86 / RSK2980</strain>
    </source>
</reference>
<dbReference type="EC" id="2.7.7.8" evidence="1"/>
<dbReference type="EMBL" id="CP000880">
    <property type="protein sequence ID" value="ABX24121.1"/>
    <property type="status" value="ALT_INIT"/>
    <property type="molecule type" value="Genomic_DNA"/>
</dbReference>
<dbReference type="SMR" id="A9MP39"/>
<dbReference type="STRING" id="41514.SARI_04342"/>
<dbReference type="KEGG" id="ses:SARI_04342"/>
<dbReference type="HOGENOM" id="CLU_004217_2_2_6"/>
<dbReference type="Proteomes" id="UP000002084">
    <property type="component" value="Chromosome"/>
</dbReference>
<dbReference type="GO" id="GO:0005829">
    <property type="term" value="C:cytosol"/>
    <property type="evidence" value="ECO:0007669"/>
    <property type="project" value="TreeGrafter"/>
</dbReference>
<dbReference type="GO" id="GO:0000175">
    <property type="term" value="F:3'-5'-RNA exonuclease activity"/>
    <property type="evidence" value="ECO:0007669"/>
    <property type="project" value="TreeGrafter"/>
</dbReference>
<dbReference type="GO" id="GO:0000287">
    <property type="term" value="F:magnesium ion binding"/>
    <property type="evidence" value="ECO:0007669"/>
    <property type="project" value="UniProtKB-UniRule"/>
</dbReference>
<dbReference type="GO" id="GO:0004654">
    <property type="term" value="F:polyribonucleotide nucleotidyltransferase activity"/>
    <property type="evidence" value="ECO:0007669"/>
    <property type="project" value="UniProtKB-UniRule"/>
</dbReference>
<dbReference type="GO" id="GO:0003723">
    <property type="term" value="F:RNA binding"/>
    <property type="evidence" value="ECO:0007669"/>
    <property type="project" value="UniProtKB-UniRule"/>
</dbReference>
<dbReference type="GO" id="GO:0006402">
    <property type="term" value="P:mRNA catabolic process"/>
    <property type="evidence" value="ECO:0007669"/>
    <property type="project" value="UniProtKB-UniRule"/>
</dbReference>
<dbReference type="GO" id="GO:0006396">
    <property type="term" value="P:RNA processing"/>
    <property type="evidence" value="ECO:0007669"/>
    <property type="project" value="InterPro"/>
</dbReference>
<dbReference type="CDD" id="cd02393">
    <property type="entry name" value="KH-I_PNPase"/>
    <property type="match status" value="1"/>
</dbReference>
<dbReference type="CDD" id="cd11363">
    <property type="entry name" value="RNase_PH_PNPase_1"/>
    <property type="match status" value="1"/>
</dbReference>
<dbReference type="CDD" id="cd11364">
    <property type="entry name" value="RNase_PH_PNPase_2"/>
    <property type="match status" value="1"/>
</dbReference>
<dbReference type="CDD" id="cd04472">
    <property type="entry name" value="S1_PNPase"/>
    <property type="match status" value="1"/>
</dbReference>
<dbReference type="FunFam" id="2.40.50.140:FF:000023">
    <property type="entry name" value="Polyribonucleotide nucleotidyltransferase"/>
    <property type="match status" value="1"/>
</dbReference>
<dbReference type="FunFam" id="3.30.1370.10:FF:000001">
    <property type="entry name" value="Polyribonucleotide nucleotidyltransferase"/>
    <property type="match status" value="1"/>
</dbReference>
<dbReference type="FunFam" id="3.30.230.70:FF:000001">
    <property type="entry name" value="Polyribonucleotide nucleotidyltransferase"/>
    <property type="match status" value="1"/>
</dbReference>
<dbReference type="FunFam" id="3.30.230.70:FF:000002">
    <property type="entry name" value="Polyribonucleotide nucleotidyltransferase"/>
    <property type="match status" value="1"/>
</dbReference>
<dbReference type="Gene3D" id="3.30.230.70">
    <property type="entry name" value="GHMP Kinase, N-terminal domain"/>
    <property type="match status" value="2"/>
</dbReference>
<dbReference type="Gene3D" id="3.30.1370.10">
    <property type="entry name" value="K Homology domain, type 1"/>
    <property type="match status" value="1"/>
</dbReference>
<dbReference type="Gene3D" id="2.40.50.140">
    <property type="entry name" value="Nucleic acid-binding proteins"/>
    <property type="match status" value="1"/>
</dbReference>
<dbReference type="HAMAP" id="MF_01595">
    <property type="entry name" value="PNPase"/>
    <property type="match status" value="1"/>
</dbReference>
<dbReference type="InterPro" id="IPR001247">
    <property type="entry name" value="ExoRNase_PH_dom1"/>
</dbReference>
<dbReference type="InterPro" id="IPR015847">
    <property type="entry name" value="ExoRNase_PH_dom2"/>
</dbReference>
<dbReference type="InterPro" id="IPR036345">
    <property type="entry name" value="ExoRNase_PH_dom2_sf"/>
</dbReference>
<dbReference type="InterPro" id="IPR004087">
    <property type="entry name" value="KH_dom"/>
</dbReference>
<dbReference type="InterPro" id="IPR004088">
    <property type="entry name" value="KH_dom_type_1"/>
</dbReference>
<dbReference type="InterPro" id="IPR036612">
    <property type="entry name" value="KH_dom_type_1_sf"/>
</dbReference>
<dbReference type="InterPro" id="IPR012340">
    <property type="entry name" value="NA-bd_OB-fold"/>
</dbReference>
<dbReference type="InterPro" id="IPR012162">
    <property type="entry name" value="PNPase"/>
</dbReference>
<dbReference type="InterPro" id="IPR027408">
    <property type="entry name" value="PNPase/RNase_PH_dom_sf"/>
</dbReference>
<dbReference type="InterPro" id="IPR015848">
    <property type="entry name" value="PNPase_PH_RNA-bd_bac/org-type"/>
</dbReference>
<dbReference type="InterPro" id="IPR036456">
    <property type="entry name" value="PNPase_PH_RNA-bd_sf"/>
</dbReference>
<dbReference type="InterPro" id="IPR020568">
    <property type="entry name" value="Ribosomal_Su5_D2-typ_SF"/>
</dbReference>
<dbReference type="InterPro" id="IPR003029">
    <property type="entry name" value="S1_domain"/>
</dbReference>
<dbReference type="NCBIfam" id="TIGR03591">
    <property type="entry name" value="polynuc_phos"/>
    <property type="match status" value="1"/>
</dbReference>
<dbReference type="NCBIfam" id="NF008805">
    <property type="entry name" value="PRK11824.1"/>
    <property type="match status" value="1"/>
</dbReference>
<dbReference type="PANTHER" id="PTHR11252">
    <property type="entry name" value="POLYRIBONUCLEOTIDE NUCLEOTIDYLTRANSFERASE"/>
    <property type="match status" value="1"/>
</dbReference>
<dbReference type="PANTHER" id="PTHR11252:SF0">
    <property type="entry name" value="POLYRIBONUCLEOTIDE NUCLEOTIDYLTRANSFERASE 1, MITOCHONDRIAL"/>
    <property type="match status" value="1"/>
</dbReference>
<dbReference type="Pfam" id="PF00013">
    <property type="entry name" value="KH_1"/>
    <property type="match status" value="1"/>
</dbReference>
<dbReference type="Pfam" id="PF03726">
    <property type="entry name" value="PNPase"/>
    <property type="match status" value="1"/>
</dbReference>
<dbReference type="Pfam" id="PF01138">
    <property type="entry name" value="RNase_PH"/>
    <property type="match status" value="2"/>
</dbReference>
<dbReference type="Pfam" id="PF03725">
    <property type="entry name" value="RNase_PH_C"/>
    <property type="match status" value="2"/>
</dbReference>
<dbReference type="Pfam" id="PF00575">
    <property type="entry name" value="S1"/>
    <property type="match status" value="1"/>
</dbReference>
<dbReference type="PIRSF" id="PIRSF005499">
    <property type="entry name" value="PNPase"/>
    <property type="match status" value="1"/>
</dbReference>
<dbReference type="SMART" id="SM00322">
    <property type="entry name" value="KH"/>
    <property type="match status" value="1"/>
</dbReference>
<dbReference type="SMART" id="SM00316">
    <property type="entry name" value="S1"/>
    <property type="match status" value="1"/>
</dbReference>
<dbReference type="SUPFAM" id="SSF54791">
    <property type="entry name" value="Eukaryotic type KH-domain (KH-domain type I)"/>
    <property type="match status" value="1"/>
</dbReference>
<dbReference type="SUPFAM" id="SSF50249">
    <property type="entry name" value="Nucleic acid-binding proteins"/>
    <property type="match status" value="1"/>
</dbReference>
<dbReference type="SUPFAM" id="SSF46915">
    <property type="entry name" value="Polynucleotide phosphorylase/guanosine pentaphosphate synthase (PNPase/GPSI), domain 3"/>
    <property type="match status" value="1"/>
</dbReference>
<dbReference type="SUPFAM" id="SSF55666">
    <property type="entry name" value="Ribonuclease PH domain 2-like"/>
    <property type="match status" value="2"/>
</dbReference>
<dbReference type="SUPFAM" id="SSF54211">
    <property type="entry name" value="Ribosomal protein S5 domain 2-like"/>
    <property type="match status" value="2"/>
</dbReference>
<dbReference type="PROSITE" id="PS50084">
    <property type="entry name" value="KH_TYPE_1"/>
    <property type="match status" value="1"/>
</dbReference>
<dbReference type="PROSITE" id="PS50126">
    <property type="entry name" value="S1"/>
    <property type="match status" value="1"/>
</dbReference>
<feature type="chain" id="PRO_0000329829" description="Polyribonucleotide nucleotidyltransferase">
    <location>
        <begin position="1"/>
        <end position="711"/>
    </location>
</feature>
<feature type="domain" description="KH" evidence="1">
    <location>
        <begin position="553"/>
        <end position="612"/>
    </location>
</feature>
<feature type="domain" description="S1 motif" evidence="1">
    <location>
        <begin position="622"/>
        <end position="690"/>
    </location>
</feature>
<feature type="region of interest" description="Disordered" evidence="2">
    <location>
        <begin position="689"/>
        <end position="711"/>
    </location>
</feature>
<feature type="compositionally biased region" description="Low complexity" evidence="2">
    <location>
        <begin position="694"/>
        <end position="711"/>
    </location>
</feature>
<feature type="binding site" evidence="1">
    <location>
        <position position="486"/>
    </location>
    <ligand>
        <name>Mg(2+)</name>
        <dbReference type="ChEBI" id="CHEBI:18420"/>
    </ligand>
</feature>
<feature type="binding site" evidence="1">
    <location>
        <position position="492"/>
    </location>
    <ligand>
        <name>Mg(2+)</name>
        <dbReference type="ChEBI" id="CHEBI:18420"/>
    </ligand>
</feature>
<keyword id="KW-0963">Cytoplasm</keyword>
<keyword id="KW-0460">Magnesium</keyword>
<keyword id="KW-0479">Metal-binding</keyword>
<keyword id="KW-0548">Nucleotidyltransferase</keyword>
<keyword id="KW-1185">Reference proteome</keyword>
<keyword id="KW-0694">RNA-binding</keyword>
<keyword id="KW-0808">Transferase</keyword>
<accession>A9MP39</accession>
<evidence type="ECO:0000255" key="1">
    <source>
        <dbReference type="HAMAP-Rule" id="MF_01595"/>
    </source>
</evidence>
<evidence type="ECO:0000256" key="2">
    <source>
        <dbReference type="SAM" id="MobiDB-lite"/>
    </source>
</evidence>
<evidence type="ECO:0000305" key="3"/>
<name>PNP_SALAR</name>